<reference key="1">
    <citation type="submission" date="2009-01" db="EMBL/GenBank/DDBJ databases">
        <title>Complete sequence of Desulfovibrio desulfuricans subsp. desulfuricans str. ATCC 27774.</title>
        <authorList>
            <consortium name="US DOE Joint Genome Institute"/>
            <person name="Lucas S."/>
            <person name="Copeland A."/>
            <person name="Lapidus A."/>
            <person name="Glavina del Rio T."/>
            <person name="Tice H."/>
            <person name="Bruce D."/>
            <person name="Goodwin L."/>
            <person name="Pitluck S."/>
            <person name="Sims D."/>
            <person name="Lu M."/>
            <person name="Kiss H."/>
            <person name="Meineke L."/>
            <person name="Brettin T."/>
            <person name="Detter J.C."/>
            <person name="Han C."/>
            <person name="Larimer F."/>
            <person name="Land M."/>
            <person name="Hauser L."/>
            <person name="Kyrpides N."/>
            <person name="Ovchinnikova G."/>
            <person name="Hazen T.C."/>
        </authorList>
    </citation>
    <scope>NUCLEOTIDE SEQUENCE [LARGE SCALE GENOMIC DNA]</scope>
    <source>
        <strain>ATCC 27774 / DSM 6949 / MB</strain>
    </source>
</reference>
<organism>
    <name type="scientific">Desulfovibrio desulfuricans (strain ATCC 27774 / DSM 6949 / MB)</name>
    <dbReference type="NCBI Taxonomy" id="525146"/>
    <lineage>
        <taxon>Bacteria</taxon>
        <taxon>Pseudomonadati</taxon>
        <taxon>Thermodesulfobacteriota</taxon>
        <taxon>Desulfovibrionia</taxon>
        <taxon>Desulfovibrionales</taxon>
        <taxon>Desulfovibrionaceae</taxon>
        <taxon>Desulfovibrio</taxon>
    </lineage>
</organism>
<name>DTD_DESDA</name>
<keyword id="KW-0963">Cytoplasm</keyword>
<keyword id="KW-0378">Hydrolase</keyword>
<keyword id="KW-0694">RNA-binding</keyword>
<keyword id="KW-0820">tRNA-binding</keyword>
<accession>B8J080</accession>
<dbReference type="EC" id="3.1.1.96" evidence="1"/>
<dbReference type="EMBL" id="CP001358">
    <property type="protein sequence ID" value="ACL49157.1"/>
    <property type="molecule type" value="Genomic_DNA"/>
</dbReference>
<dbReference type="SMR" id="B8J080"/>
<dbReference type="STRING" id="525146.Ddes_1254"/>
<dbReference type="KEGG" id="dds:Ddes_1254"/>
<dbReference type="eggNOG" id="COG1490">
    <property type="taxonomic scope" value="Bacteria"/>
</dbReference>
<dbReference type="HOGENOM" id="CLU_076901_1_0_7"/>
<dbReference type="GO" id="GO:0005737">
    <property type="term" value="C:cytoplasm"/>
    <property type="evidence" value="ECO:0007669"/>
    <property type="project" value="UniProtKB-SubCell"/>
</dbReference>
<dbReference type="GO" id="GO:0051500">
    <property type="term" value="F:D-tyrosyl-tRNA(Tyr) deacylase activity"/>
    <property type="evidence" value="ECO:0007669"/>
    <property type="project" value="TreeGrafter"/>
</dbReference>
<dbReference type="GO" id="GO:0106026">
    <property type="term" value="F:Gly-tRNA(Ala) deacylase activity"/>
    <property type="evidence" value="ECO:0007669"/>
    <property type="project" value="UniProtKB-UniRule"/>
</dbReference>
<dbReference type="GO" id="GO:0043908">
    <property type="term" value="F:Ser(Gly)-tRNA(Ala) hydrolase activity"/>
    <property type="evidence" value="ECO:0007669"/>
    <property type="project" value="UniProtKB-UniRule"/>
</dbReference>
<dbReference type="GO" id="GO:0000049">
    <property type="term" value="F:tRNA binding"/>
    <property type="evidence" value="ECO:0007669"/>
    <property type="project" value="UniProtKB-UniRule"/>
</dbReference>
<dbReference type="GO" id="GO:0019478">
    <property type="term" value="P:D-amino acid catabolic process"/>
    <property type="evidence" value="ECO:0007669"/>
    <property type="project" value="UniProtKB-UniRule"/>
</dbReference>
<dbReference type="FunFam" id="3.50.80.10:FF:000001">
    <property type="entry name" value="D-aminoacyl-tRNA deacylase"/>
    <property type="match status" value="1"/>
</dbReference>
<dbReference type="Gene3D" id="3.50.80.10">
    <property type="entry name" value="D-tyrosyl-tRNA(Tyr) deacylase"/>
    <property type="match status" value="1"/>
</dbReference>
<dbReference type="HAMAP" id="MF_00518">
    <property type="entry name" value="Deacylase_Dtd"/>
    <property type="match status" value="1"/>
</dbReference>
<dbReference type="InterPro" id="IPR003732">
    <property type="entry name" value="Daa-tRNA_deacyls_DTD"/>
</dbReference>
<dbReference type="InterPro" id="IPR023509">
    <property type="entry name" value="DTD-like_sf"/>
</dbReference>
<dbReference type="NCBIfam" id="TIGR00256">
    <property type="entry name" value="D-aminoacyl-tRNA deacylase"/>
    <property type="match status" value="1"/>
</dbReference>
<dbReference type="PANTHER" id="PTHR10472:SF5">
    <property type="entry name" value="D-AMINOACYL-TRNA DEACYLASE 1"/>
    <property type="match status" value="1"/>
</dbReference>
<dbReference type="PANTHER" id="PTHR10472">
    <property type="entry name" value="D-TYROSYL-TRNA TYR DEACYLASE"/>
    <property type="match status" value="1"/>
</dbReference>
<dbReference type="Pfam" id="PF02580">
    <property type="entry name" value="Tyr_Deacylase"/>
    <property type="match status" value="1"/>
</dbReference>
<dbReference type="SUPFAM" id="SSF69500">
    <property type="entry name" value="DTD-like"/>
    <property type="match status" value="1"/>
</dbReference>
<proteinExistence type="inferred from homology"/>
<gene>
    <name evidence="1" type="primary">dtd</name>
    <name type="ordered locus">Ddes_1254</name>
</gene>
<comment type="function">
    <text evidence="1">An aminoacyl-tRNA editing enzyme that deacylates mischarged D-aminoacyl-tRNAs. Also deacylates mischarged glycyl-tRNA(Ala), protecting cells against glycine mischarging by AlaRS. Acts via tRNA-based rather than protein-based catalysis; rejects L-amino acids rather than detecting D-amino acids in the active site. By recycling D-aminoacyl-tRNA to D-amino acids and free tRNA molecules, this enzyme counteracts the toxicity associated with the formation of D-aminoacyl-tRNA entities in vivo and helps enforce protein L-homochirality.</text>
</comment>
<comment type="catalytic activity">
    <reaction evidence="1">
        <text>glycyl-tRNA(Ala) + H2O = tRNA(Ala) + glycine + H(+)</text>
        <dbReference type="Rhea" id="RHEA:53744"/>
        <dbReference type="Rhea" id="RHEA-COMP:9657"/>
        <dbReference type="Rhea" id="RHEA-COMP:13640"/>
        <dbReference type="ChEBI" id="CHEBI:15377"/>
        <dbReference type="ChEBI" id="CHEBI:15378"/>
        <dbReference type="ChEBI" id="CHEBI:57305"/>
        <dbReference type="ChEBI" id="CHEBI:78442"/>
        <dbReference type="ChEBI" id="CHEBI:78522"/>
        <dbReference type="EC" id="3.1.1.96"/>
    </reaction>
</comment>
<comment type="catalytic activity">
    <reaction evidence="1">
        <text>a D-aminoacyl-tRNA + H2O = a tRNA + a D-alpha-amino acid + H(+)</text>
        <dbReference type="Rhea" id="RHEA:13953"/>
        <dbReference type="Rhea" id="RHEA-COMP:10123"/>
        <dbReference type="Rhea" id="RHEA-COMP:10124"/>
        <dbReference type="ChEBI" id="CHEBI:15377"/>
        <dbReference type="ChEBI" id="CHEBI:15378"/>
        <dbReference type="ChEBI" id="CHEBI:59871"/>
        <dbReference type="ChEBI" id="CHEBI:78442"/>
        <dbReference type="ChEBI" id="CHEBI:79333"/>
        <dbReference type="EC" id="3.1.1.96"/>
    </reaction>
</comment>
<comment type="subunit">
    <text evidence="1">Homodimer.</text>
</comment>
<comment type="subcellular location">
    <subcellularLocation>
        <location evidence="1">Cytoplasm</location>
    </subcellularLocation>
</comment>
<comment type="domain">
    <text evidence="1">A Gly-cisPro motif from one monomer fits into the active site of the other monomer to allow specific chiral rejection of L-amino acids.</text>
</comment>
<comment type="similarity">
    <text evidence="1">Belongs to the DTD family.</text>
</comment>
<protein>
    <recommendedName>
        <fullName evidence="1">D-aminoacyl-tRNA deacylase</fullName>
        <shortName evidence="1">DTD</shortName>
        <ecNumber evidence="1">3.1.1.96</ecNumber>
    </recommendedName>
    <alternativeName>
        <fullName evidence="1">Gly-tRNA(Ala) deacylase</fullName>
    </alternativeName>
</protein>
<sequence>MRILVQRVTEASVNVDGRQVAAIGPGIMALVGFGQEDGPDFHNRPAFRGMAQKLAGLRIFPGQGELANKFHTSLEEFGGQLLLVPQFTLYADCRKGRRPSFTDAGNPAWAEPMFEHFVKIVDESCSVSVSSGIFGADMAVRLCNWGPVTIWLDSLSLFGS</sequence>
<feature type="chain" id="PRO_1000146192" description="D-aminoacyl-tRNA deacylase">
    <location>
        <begin position="1"/>
        <end position="160"/>
    </location>
</feature>
<feature type="short sequence motif" description="Gly-cisPro motif, important for rejection of L-amino acids" evidence="1">
    <location>
        <begin position="146"/>
        <end position="147"/>
    </location>
</feature>
<evidence type="ECO:0000255" key="1">
    <source>
        <dbReference type="HAMAP-Rule" id="MF_00518"/>
    </source>
</evidence>